<name>PSBT_TUPAK</name>
<feature type="chain" id="PRO_0000276310" description="Photosystem II reaction center protein T">
    <location>
        <begin position="1"/>
        <end position="31"/>
    </location>
</feature>
<feature type="transmembrane region" description="Helical" evidence="1">
    <location>
        <begin position="3"/>
        <end position="23"/>
    </location>
</feature>
<dbReference type="EMBL" id="AY835431">
    <property type="protein sequence ID" value="AAV80661.1"/>
    <property type="molecule type" value="Genomic_DNA"/>
</dbReference>
<dbReference type="RefSeq" id="YP_636239.1">
    <property type="nucleotide sequence ID" value="NC_008114.1"/>
</dbReference>
<dbReference type="SMR" id="Q3ZJ28"/>
<dbReference type="GeneID" id="4108841"/>
<dbReference type="GO" id="GO:0009535">
    <property type="term" value="C:chloroplast thylakoid membrane"/>
    <property type="evidence" value="ECO:0007669"/>
    <property type="project" value="UniProtKB-SubCell"/>
</dbReference>
<dbReference type="GO" id="GO:0009539">
    <property type="term" value="C:photosystem II reaction center"/>
    <property type="evidence" value="ECO:0007669"/>
    <property type="project" value="InterPro"/>
</dbReference>
<dbReference type="GO" id="GO:0015979">
    <property type="term" value="P:photosynthesis"/>
    <property type="evidence" value="ECO:0007669"/>
    <property type="project" value="UniProtKB-UniRule"/>
</dbReference>
<dbReference type="HAMAP" id="MF_00808">
    <property type="entry name" value="PSII_PsbT"/>
    <property type="match status" value="1"/>
</dbReference>
<dbReference type="InterPro" id="IPR001743">
    <property type="entry name" value="PSII_PsbT"/>
</dbReference>
<dbReference type="InterPro" id="IPR037268">
    <property type="entry name" value="PSII_PsbT_sf"/>
</dbReference>
<dbReference type="PANTHER" id="PTHR36411">
    <property type="match status" value="1"/>
</dbReference>
<dbReference type="PANTHER" id="PTHR36411:SF2">
    <property type="entry name" value="PHOTOSYSTEM II REACTION CENTER PROTEIN T"/>
    <property type="match status" value="1"/>
</dbReference>
<dbReference type="Pfam" id="PF01405">
    <property type="entry name" value="PsbT"/>
    <property type="match status" value="1"/>
</dbReference>
<dbReference type="SUPFAM" id="SSF161029">
    <property type="entry name" value="Photosystem II reaction center protein T, PsbT"/>
    <property type="match status" value="1"/>
</dbReference>
<proteinExistence type="inferred from homology"/>
<sequence>MEALVYTFLLVGTLGIIFFSIFFREPPRIIK</sequence>
<comment type="function">
    <text evidence="1">Found at the monomer-monomer interface of the photosystem II (PS II) dimer, plays a role in assembly and dimerization of PSII. PSII is a light-driven water plastoquinone oxidoreductase, using light energy to abstract electrons from H(2)O, generating a proton gradient subsequently used for ATP formation.</text>
</comment>
<comment type="subunit">
    <text evidence="1">PSII is composed of 1 copy each of membrane proteins PsbA, PsbB, PsbC, PsbD, PsbE, PsbF, PsbH, PsbI, PsbJ, PsbK, PsbL, PsbM, PsbT, PsbY, PsbZ, Psb30/Ycf12, at least 3 peripheral proteins of the oxygen-evolving complex and a large number of cofactors. It forms dimeric complexes.</text>
</comment>
<comment type="subcellular location">
    <subcellularLocation>
        <location evidence="1">Plastid</location>
        <location evidence="1">Chloroplast thylakoid membrane</location>
        <topology evidence="1">Single-pass membrane protein</topology>
    </subcellularLocation>
</comment>
<comment type="similarity">
    <text evidence="1">Belongs to the PsbT family.</text>
</comment>
<geneLocation type="chloroplast"/>
<evidence type="ECO:0000255" key="1">
    <source>
        <dbReference type="HAMAP-Rule" id="MF_00808"/>
    </source>
</evidence>
<accession>Q3ZJ28</accession>
<organism>
    <name type="scientific">Tupiella akineta</name>
    <name type="common">Green alga</name>
    <name type="synonym">Pseudendoclonium akinetum</name>
    <dbReference type="NCBI Taxonomy" id="160070"/>
    <lineage>
        <taxon>Eukaryota</taxon>
        <taxon>Viridiplantae</taxon>
        <taxon>Chlorophyta</taxon>
        <taxon>Ulvophyceae</taxon>
        <taxon>OUU clade</taxon>
        <taxon>Ulotrichales</taxon>
        <taxon>Tupiellaceae</taxon>
        <taxon>Tupiella</taxon>
    </lineage>
</organism>
<keyword id="KW-0150">Chloroplast</keyword>
<keyword id="KW-0472">Membrane</keyword>
<keyword id="KW-0602">Photosynthesis</keyword>
<keyword id="KW-0604">Photosystem II</keyword>
<keyword id="KW-0934">Plastid</keyword>
<keyword id="KW-0793">Thylakoid</keyword>
<keyword id="KW-0812">Transmembrane</keyword>
<keyword id="KW-1133">Transmembrane helix</keyword>
<reference key="1">
    <citation type="journal article" date="2005" name="Mol. Biol. Evol.">
        <title>The chloroplast genome sequence of the green alga Pseudendoclonium akinetum (Ulvophyceae) reveals unusual structural features and new insights into the branching order of chlorophyte lineages.</title>
        <authorList>
            <person name="Pombert J.-F."/>
            <person name="Otis C."/>
            <person name="Lemieux C."/>
            <person name="Turmel M."/>
        </authorList>
    </citation>
    <scope>NUCLEOTIDE SEQUENCE [LARGE SCALE GENOMIC DNA]</scope>
    <source>
        <strain>UTEX 1912</strain>
    </source>
</reference>
<gene>
    <name evidence="1" type="primary">psbT</name>
</gene>
<protein>
    <recommendedName>
        <fullName evidence="1">Photosystem II reaction center protein T</fullName>
        <shortName evidence="1">PSII-T</shortName>
    </recommendedName>
</protein>